<reference key="1">
    <citation type="journal article" date="2000" name="Plant Physiol.">
        <title>Cytochrome P450-dependent metabolism of oxylipins in tomato. Cloning and expression of allene oxide synthase and fatty acid hydroperoxide lyase.</title>
        <authorList>
            <person name="Howe G.A."/>
            <person name="Lee G.I."/>
            <person name="Itoh A."/>
            <person name="Li L."/>
            <person name="DeRocher A.E."/>
        </authorList>
    </citation>
    <scope>NUCLEOTIDE SEQUENCE [MRNA]</scope>
    <scope>FUNCTION</scope>
    <scope>CATALYTIC ACTIVITY</scope>
    <scope>SUBSTRATE SPECIFICITY</scope>
    <scope>TISSUE SPECIFICITY</scope>
</reference>
<reference key="2">
    <citation type="journal article" date="2012" name="Nature">
        <title>The tomato genome sequence provides insights into fleshy fruit evolution.</title>
        <authorList>
            <consortium name="Tomato Genome Consortium"/>
        </authorList>
    </citation>
    <scope>NUCLEOTIDE SEQUENCE [LARGE SCALE GENOMIC DNA]</scope>
    <source>
        <strain>cv. Heinz 1706</strain>
    </source>
</reference>
<reference key="3">
    <citation type="journal article" date="2001" name="Plant Physiol.">
        <title>Tomato allene oxide synthase and fatty acid hydroperoxide lyase, two cytochrome P450s involved in oxylipin metabolism, are targeted to different membranes of chloroplast envelope.</title>
        <authorList>
            <person name="Froehlich J.E."/>
            <person name="Itoh A."/>
            <person name="Howe G.A."/>
        </authorList>
    </citation>
    <scope>SUBCELLULAR LOCATION</scope>
    <scope>TOPOLOGY</scope>
    <scope>MUTAGENESIS OF CYS-465</scope>
</reference>
<reference key="4">
    <citation type="journal article" date="2002" name="J. Biol. Chem.">
        <title>Identification of a jasmonate-regulated allene oxide synthase that metabolizes 9-hydroperoxides of linoleic and linolenic acids.</title>
        <authorList>
            <person name="Itoh A."/>
            <person name="Schilmiller A.L."/>
            <person name="McCaig B.C."/>
            <person name="Howe G.A."/>
        </authorList>
    </citation>
    <scope>GENE FAMILY</scope>
    <scope>NOMENCLATURE</scope>
</reference>
<reference key="5">
    <citation type="journal article" date="2003" name="Plant Cell Physiol.">
        <title>Enzymes of jasmonate biosynthesis occur in tomato sieve elements.</title>
        <authorList>
            <person name="Hause B."/>
            <person name="Hause G."/>
            <person name="Kutter C."/>
            <person name="Miersch O."/>
            <person name="Wasternack C."/>
        </authorList>
    </citation>
    <scope>TISSUE SPECIFICITY</scope>
</reference>
<feature type="transit peptide" description="Chloroplast" evidence="3">
    <location>
        <begin position="1"/>
        <end position="31"/>
    </location>
</feature>
<feature type="chain" id="PRO_0000436191" description="Allene oxide synthase 2, chloroplastic" evidence="3">
    <location>
        <begin position="32"/>
        <end position="510"/>
    </location>
</feature>
<feature type="binding site" evidence="2">
    <location>
        <position position="127"/>
    </location>
    <ligand>
        <name>heme b</name>
        <dbReference type="ChEBI" id="CHEBI:60344"/>
    </ligand>
</feature>
<feature type="binding site" evidence="2">
    <location>
        <position position="158"/>
    </location>
    <ligand>
        <name>heme b</name>
        <dbReference type="ChEBI" id="CHEBI:60344"/>
    </ligand>
</feature>
<feature type="binding site" evidence="2">
    <location>
        <position position="162"/>
    </location>
    <ligand>
        <name>heme b</name>
        <dbReference type="ChEBI" id="CHEBI:60344"/>
    </ligand>
</feature>
<feature type="binding site" evidence="2">
    <location>
        <position position="315"/>
    </location>
    <ligand>
        <name>(13S)-hydroperoxy-(9Z,11E)-octadecadienoate</name>
        <dbReference type="ChEBI" id="CHEBI:57466"/>
    </ligand>
</feature>
<feature type="binding site" evidence="2">
    <location>
        <position position="315"/>
    </location>
    <ligand>
        <name>(13S)-hydroperoxy-(9Z,11E,15Z)-octadecatrienoate</name>
        <dbReference type="ChEBI" id="CHEBI:58757"/>
    </ligand>
</feature>
<feature type="binding site" evidence="1">
    <location>
        <position position="321"/>
    </location>
    <ligand>
        <name>(13S)-hydroperoxy-(9Z,11E)-octadecadienoate</name>
        <dbReference type="ChEBI" id="CHEBI:57466"/>
    </ligand>
</feature>
<feature type="binding site" evidence="2">
    <location>
        <position position="463"/>
    </location>
    <ligand>
        <name>heme b</name>
        <dbReference type="ChEBI" id="CHEBI:60344"/>
    </ligand>
</feature>
<feature type="binding site" description="axial binding residue" evidence="2">
    <location>
        <position position="465"/>
    </location>
    <ligand>
        <name>heme b</name>
        <dbReference type="ChEBI" id="CHEBI:60344"/>
    </ligand>
    <ligandPart>
        <name>Fe</name>
        <dbReference type="ChEBI" id="CHEBI:18248"/>
    </ligandPart>
</feature>
<feature type="mutagenesis site" description="Loss of heme binding and loss of activity, but no effect on chloroplast import." evidence="5">
    <original>C</original>
    <variation>A</variation>
    <location>
        <position position="465"/>
    </location>
</feature>
<name>AOS2_SOLLC</name>
<proteinExistence type="evidence at protein level"/>
<gene>
    <name evidence="7" type="primary">AOS2</name>
    <name type="ordered locus">Solyc11g069800</name>
</gene>
<organism>
    <name type="scientific">Solanum lycopersicum</name>
    <name type="common">Tomato</name>
    <name type="synonym">Lycopersicon esculentum</name>
    <dbReference type="NCBI Taxonomy" id="4081"/>
    <lineage>
        <taxon>Eukaryota</taxon>
        <taxon>Viridiplantae</taxon>
        <taxon>Streptophyta</taxon>
        <taxon>Embryophyta</taxon>
        <taxon>Tracheophyta</taxon>
        <taxon>Spermatophyta</taxon>
        <taxon>Magnoliopsida</taxon>
        <taxon>eudicotyledons</taxon>
        <taxon>Gunneridae</taxon>
        <taxon>Pentapetalae</taxon>
        <taxon>asterids</taxon>
        <taxon>lamiids</taxon>
        <taxon>Solanales</taxon>
        <taxon>Solanaceae</taxon>
        <taxon>Solanoideae</taxon>
        <taxon>Solaneae</taxon>
        <taxon>Solanum</taxon>
        <taxon>Solanum subgen. Lycopersicon</taxon>
    </lineage>
</organism>
<evidence type="ECO:0000250" key="1">
    <source>
        <dbReference type="UniProtKB" id="Q40778"/>
    </source>
</evidence>
<evidence type="ECO:0000250" key="2">
    <source>
        <dbReference type="UniProtKB" id="Q96242"/>
    </source>
</evidence>
<evidence type="ECO:0000255" key="3"/>
<evidence type="ECO:0000269" key="4">
    <source>
    </source>
</evidence>
<evidence type="ECO:0000269" key="5">
    <source>
    </source>
</evidence>
<evidence type="ECO:0000269" key="6">
    <source>
    </source>
</evidence>
<evidence type="ECO:0000303" key="7">
    <source>
    </source>
</evidence>
<evidence type="ECO:0000305" key="8"/>
<evidence type="ECO:0000305" key="9">
    <source>
    </source>
</evidence>
<sequence length="510" mass="57203">MALTLSFSLPLPSLHQKIPSKYSTFRPIIVSLSDKSTIEITQPIKLSTRTIPGDYGLPGIGPWKDRLDYFYNQGKNDFFESRIAKYKSTIFRTNMPPGPFITSNPKVIVLLDGKSFPVLFDASKVEKKDLFTGTFVPSTELTGGYRILSYLDPSEPNHEKLKKLMFFLLSSRRDHVIPEFHETYTELFETLDKEMEEKGTVGFNSGSDQAAFNFLARSLFGVNPVETKLGTDGPALIGKWILLQLHPVITLGLPKFLDDVLLHTFRLPPILVKKDYQRLYDFFYTNSANLFIEAEKLGISKDEACHNLLFATCFNSFGGMKIFFPNMLKSIAKAGVEIHTRLANEIRSEVKSAGGKITMSAMEKMPLMKSVVYEALRVDPPVASQYGRAKQDLKIESHDAVFEVKKGEILFGYQPFATKDPKIFDRPGEFVADRFVGEEGEKLLKHVLWSNGPETESPTVGNKQCAGKDFVVMVSRLFVTEFFLRYGTLNVDVGTSALGSSITITSLKKA</sequence>
<keyword id="KW-0150">Chloroplast</keyword>
<keyword id="KW-0275">Fatty acid biosynthesis</keyword>
<keyword id="KW-0276">Fatty acid metabolism</keyword>
<keyword id="KW-0349">Heme</keyword>
<keyword id="KW-0408">Iron</keyword>
<keyword id="KW-0444">Lipid biosynthesis</keyword>
<keyword id="KW-0443">Lipid metabolism</keyword>
<keyword id="KW-0456">Lyase</keyword>
<keyword id="KW-0472">Membrane</keyword>
<keyword id="KW-0479">Metal-binding</keyword>
<keyword id="KW-0925">Oxylipin biosynthesis</keyword>
<keyword id="KW-0611">Plant defense</keyword>
<keyword id="KW-0934">Plastid</keyword>
<keyword id="KW-1001">Plastid inner membrane</keyword>
<keyword id="KW-1185">Reference proteome</keyword>
<keyword id="KW-0809">Transit peptide</keyword>
<protein>
    <recommendedName>
        <fullName evidence="7">Allene oxide synthase 2, chloroplastic</fullName>
        <shortName evidence="7">LeAOS2</shortName>
        <ecNumber evidence="4">4.2.1.92</ecNumber>
    </recommendedName>
    <alternativeName>
        <fullName evidence="8">Cytochrome P450 74A</fullName>
    </alternativeName>
</protein>
<accession>Q9LLB0</accession>
<dbReference type="EC" id="4.2.1.92" evidence="4"/>
<dbReference type="EMBL" id="AF230371">
    <property type="protein sequence ID" value="AAF67141.1"/>
    <property type="molecule type" value="mRNA"/>
</dbReference>
<dbReference type="RefSeq" id="NP_001274707.1">
    <property type="nucleotide sequence ID" value="NM_001287778.2"/>
</dbReference>
<dbReference type="SMR" id="Q9LLB0"/>
<dbReference type="FunCoup" id="Q9LLB0">
    <property type="interactions" value="543"/>
</dbReference>
<dbReference type="STRING" id="4081.Q9LLB0"/>
<dbReference type="PaxDb" id="4081-Solyc11g069800.1.1"/>
<dbReference type="EnsemblPlants" id="Solyc11g069800.1.1">
    <property type="protein sequence ID" value="Solyc11g069800.1.1.1"/>
    <property type="gene ID" value="Solyc11g069800.1"/>
</dbReference>
<dbReference type="GeneID" id="101266902"/>
<dbReference type="Gramene" id="Solyc11g069800.1.1">
    <property type="protein sequence ID" value="Solyc11g069800.1.1.1"/>
    <property type="gene ID" value="Solyc11g069800.1"/>
</dbReference>
<dbReference type="KEGG" id="sly:101266902"/>
<dbReference type="eggNOG" id="ENOG502QQNS">
    <property type="taxonomic scope" value="Eukaryota"/>
</dbReference>
<dbReference type="HOGENOM" id="CLU_045757_0_0_1"/>
<dbReference type="InParanoid" id="Q9LLB0"/>
<dbReference type="OMA" id="VETHDGF"/>
<dbReference type="OrthoDB" id="2789670at2759"/>
<dbReference type="PhylomeDB" id="Q9LLB0"/>
<dbReference type="Proteomes" id="UP000004994">
    <property type="component" value="Chromosome 11"/>
</dbReference>
<dbReference type="GO" id="GO:0009706">
    <property type="term" value="C:chloroplast inner membrane"/>
    <property type="evidence" value="ECO:0007669"/>
    <property type="project" value="UniProtKB-SubCell"/>
</dbReference>
<dbReference type="GO" id="GO:0009978">
    <property type="term" value="F:allene oxide synthase activity"/>
    <property type="evidence" value="ECO:0007669"/>
    <property type="project" value="UniProtKB-EC"/>
</dbReference>
<dbReference type="GO" id="GO:0020037">
    <property type="term" value="F:heme binding"/>
    <property type="evidence" value="ECO:0007669"/>
    <property type="project" value="InterPro"/>
</dbReference>
<dbReference type="GO" id="GO:0005506">
    <property type="term" value="F:iron ion binding"/>
    <property type="evidence" value="ECO:0007669"/>
    <property type="project" value="InterPro"/>
</dbReference>
<dbReference type="GO" id="GO:0004497">
    <property type="term" value="F:monooxygenase activity"/>
    <property type="evidence" value="ECO:0000318"/>
    <property type="project" value="GO_Central"/>
</dbReference>
<dbReference type="GO" id="GO:0016705">
    <property type="term" value="F:oxidoreductase activity, acting on paired donors, with incorporation or reduction of molecular oxygen"/>
    <property type="evidence" value="ECO:0007669"/>
    <property type="project" value="InterPro"/>
</dbReference>
<dbReference type="GO" id="GO:0006952">
    <property type="term" value="P:defense response"/>
    <property type="evidence" value="ECO:0007669"/>
    <property type="project" value="UniProtKB-KW"/>
</dbReference>
<dbReference type="GO" id="GO:0009695">
    <property type="term" value="P:jasmonic acid biosynthetic process"/>
    <property type="evidence" value="ECO:0000318"/>
    <property type="project" value="GO_Central"/>
</dbReference>
<dbReference type="GO" id="GO:0031408">
    <property type="term" value="P:oxylipin biosynthetic process"/>
    <property type="evidence" value="ECO:0007669"/>
    <property type="project" value="UniProtKB-KW"/>
</dbReference>
<dbReference type="CDD" id="cd11071">
    <property type="entry name" value="CYP74"/>
    <property type="match status" value="1"/>
</dbReference>
<dbReference type="FunFam" id="1.10.630.10:FF:000024">
    <property type="entry name" value="Allene oxide synthase, chloroplastic"/>
    <property type="match status" value="1"/>
</dbReference>
<dbReference type="Gene3D" id="1.10.630.10">
    <property type="entry name" value="Cytochrome P450"/>
    <property type="match status" value="1"/>
</dbReference>
<dbReference type="InterPro" id="IPR001128">
    <property type="entry name" value="Cyt_P450"/>
</dbReference>
<dbReference type="InterPro" id="IPR002403">
    <property type="entry name" value="Cyt_P450_E_grp-IV"/>
</dbReference>
<dbReference type="InterPro" id="IPR036396">
    <property type="entry name" value="Cyt_P450_sf"/>
</dbReference>
<dbReference type="PANTHER" id="PTHR24286:SF345">
    <property type="entry name" value="ALLENE OXIDE SYNTHASE 2, CHLOROPLASTIC"/>
    <property type="match status" value="1"/>
</dbReference>
<dbReference type="PANTHER" id="PTHR24286">
    <property type="entry name" value="CYTOCHROME P450 26"/>
    <property type="match status" value="1"/>
</dbReference>
<dbReference type="Pfam" id="PF00067">
    <property type="entry name" value="p450"/>
    <property type="match status" value="1"/>
</dbReference>
<dbReference type="PRINTS" id="PR00465">
    <property type="entry name" value="EP450IV"/>
</dbReference>
<dbReference type="SUPFAM" id="SSF48264">
    <property type="entry name" value="Cytochrome P450"/>
    <property type="match status" value="1"/>
</dbReference>
<comment type="function">
    <text evidence="4">Cytochrome P450 of the CYP74A subfamily involved in the biosynthesis of jasmonic acid from lipoxygenase-derived hydroperoxides of free fatty acids. Catalyzes the synthesis of unstable allene oxide, which is further converted spontaneously by hydrolysis or cyclization. Metabolizes 13- but not 9-hydroperoxides of linoleic and linolenic acids. Can use 15S-hydroperoxy-11(Z),13(E),17(Z)-eicosatrienoic acid (15-HPET) and 13S-hydroperoxy-9(Z),11(E),15(Z)-octadecatrienoic acid (13-HPOT) as substrates, but only 50% activity with 13S-hydroperoxy-9(Z),11(E)-octadecadienoic acid (13-HPOD).</text>
</comment>
<comment type="catalytic activity">
    <reaction evidence="4">
        <text>(13S)-hydroperoxy-(9Z,11E,15Z)-octadecatrienoate = (9Z,13S,15Z)-12,13-epoxyoctadeca-9,11,15-trienoate + H2O</text>
        <dbReference type="Rhea" id="RHEA:25074"/>
        <dbReference type="ChEBI" id="CHEBI:15377"/>
        <dbReference type="ChEBI" id="CHEBI:36438"/>
        <dbReference type="ChEBI" id="CHEBI:58757"/>
        <dbReference type="EC" id="4.2.1.92"/>
    </reaction>
    <physiologicalReaction direction="left-to-right" evidence="9">
        <dbReference type="Rhea" id="RHEA:25075"/>
    </physiologicalReaction>
</comment>
<comment type="catalytic activity">
    <reaction evidence="4">
        <text>(13S)-hydroperoxy-(9Z,11E)-octadecadienoate = (9Z,13S)-12,13-epoxyoctadeca-9,11-dienoate + H2O</text>
        <dbReference type="Rhea" id="RHEA:84075"/>
        <dbReference type="ChEBI" id="CHEBI:15377"/>
        <dbReference type="ChEBI" id="CHEBI:57465"/>
        <dbReference type="ChEBI" id="CHEBI:57466"/>
    </reaction>
    <physiologicalReaction direction="left-to-right" evidence="9">
        <dbReference type="Rhea" id="RHEA:84076"/>
    </physiologicalReaction>
</comment>
<comment type="cofactor">
    <cofactor evidence="2">
        <name>heme b</name>
        <dbReference type="ChEBI" id="CHEBI:60344"/>
    </cofactor>
</comment>
<comment type="subcellular location">
    <subcellularLocation>
        <location evidence="5">Plastid</location>
        <location evidence="5">Chloroplast inner membrane</location>
        <topology evidence="5">Peripheral membrane protein</topology>
        <orientation evidence="5">Stromal side</orientation>
    </subcellularLocation>
</comment>
<comment type="tissue specificity">
    <text evidence="4 6">Expressed in flower buds, leaves, roots, stems, petioles and cotyledons (PubMed:10859201). Not detected in ripe fruits (PubMed:10859201). Expressed in sieve elements (PubMed:12826630).</text>
</comment>
<comment type="induction">
    <text evidence="4">Up-regulated by wounding in local and systemic leaves.</text>
</comment>
<comment type="similarity">
    <text evidence="8">Belongs to the cytochrome P450 family.</text>
</comment>